<evidence type="ECO:0000255" key="1">
    <source>
        <dbReference type="HAMAP-Rule" id="MF_00017"/>
    </source>
</evidence>
<name>RECR_BACVZ</name>
<sequence>MQYPEPISKLIDSFMKLPGIGPKTAVRLAFFVLGMKEDTVLDFAKALVNAKRNLTYCSICGHITDQDPCYICEDTRRDKSVICVVQDPKDVIAMEKMKEYNGQYHVLHGAISPMDGIGPEDIKIPELLKRLQDDQVTEVILATNPNIEGEATAMYISRLLKPSGIKLSRIAHGLPVGGDLEYADEVTLSKALEGRREL</sequence>
<accession>A7Z0E4</accession>
<dbReference type="EMBL" id="CP000560">
    <property type="protein sequence ID" value="ABS72470.1"/>
    <property type="molecule type" value="Genomic_DNA"/>
</dbReference>
<dbReference type="RefSeq" id="WP_003150697.1">
    <property type="nucleotide sequence ID" value="NC_009725.2"/>
</dbReference>
<dbReference type="SMR" id="A7Z0E4"/>
<dbReference type="GeneID" id="93079165"/>
<dbReference type="KEGG" id="bay:RBAM_000270"/>
<dbReference type="HOGENOM" id="CLU_060739_1_0_9"/>
<dbReference type="Proteomes" id="UP000001120">
    <property type="component" value="Chromosome"/>
</dbReference>
<dbReference type="GO" id="GO:0003677">
    <property type="term" value="F:DNA binding"/>
    <property type="evidence" value="ECO:0007669"/>
    <property type="project" value="UniProtKB-UniRule"/>
</dbReference>
<dbReference type="GO" id="GO:0008270">
    <property type="term" value="F:zinc ion binding"/>
    <property type="evidence" value="ECO:0007669"/>
    <property type="project" value="UniProtKB-KW"/>
</dbReference>
<dbReference type="GO" id="GO:0006310">
    <property type="term" value="P:DNA recombination"/>
    <property type="evidence" value="ECO:0007669"/>
    <property type="project" value="UniProtKB-UniRule"/>
</dbReference>
<dbReference type="GO" id="GO:0006281">
    <property type="term" value="P:DNA repair"/>
    <property type="evidence" value="ECO:0007669"/>
    <property type="project" value="UniProtKB-UniRule"/>
</dbReference>
<dbReference type="CDD" id="cd01025">
    <property type="entry name" value="TOPRIM_recR"/>
    <property type="match status" value="1"/>
</dbReference>
<dbReference type="Gene3D" id="3.30.60.80">
    <property type="match status" value="1"/>
</dbReference>
<dbReference type="Gene3D" id="3.40.1360.10">
    <property type="match status" value="1"/>
</dbReference>
<dbReference type="Gene3D" id="6.10.250.240">
    <property type="match status" value="1"/>
</dbReference>
<dbReference type="Gene3D" id="1.10.8.420">
    <property type="entry name" value="RecR Domain 1"/>
    <property type="match status" value="1"/>
</dbReference>
<dbReference type="HAMAP" id="MF_00017">
    <property type="entry name" value="RecR"/>
    <property type="match status" value="1"/>
</dbReference>
<dbReference type="InterPro" id="IPR000093">
    <property type="entry name" value="DNA_Rcmb_RecR"/>
</dbReference>
<dbReference type="InterPro" id="IPR023627">
    <property type="entry name" value="Rcmb_RecR"/>
</dbReference>
<dbReference type="InterPro" id="IPR015967">
    <property type="entry name" value="Rcmb_RecR_Znf"/>
</dbReference>
<dbReference type="InterPro" id="IPR006171">
    <property type="entry name" value="TOPRIM_dom"/>
</dbReference>
<dbReference type="InterPro" id="IPR034137">
    <property type="entry name" value="TOPRIM_RecR"/>
</dbReference>
<dbReference type="NCBIfam" id="TIGR00615">
    <property type="entry name" value="recR"/>
    <property type="match status" value="1"/>
</dbReference>
<dbReference type="PANTHER" id="PTHR30446">
    <property type="entry name" value="RECOMBINATION PROTEIN RECR"/>
    <property type="match status" value="1"/>
</dbReference>
<dbReference type="PANTHER" id="PTHR30446:SF0">
    <property type="entry name" value="RECOMBINATION PROTEIN RECR"/>
    <property type="match status" value="1"/>
</dbReference>
<dbReference type="Pfam" id="PF21175">
    <property type="entry name" value="RecR_C"/>
    <property type="match status" value="1"/>
</dbReference>
<dbReference type="Pfam" id="PF21176">
    <property type="entry name" value="RecR_HhH"/>
    <property type="match status" value="1"/>
</dbReference>
<dbReference type="Pfam" id="PF02132">
    <property type="entry name" value="RecR_ZnF"/>
    <property type="match status" value="1"/>
</dbReference>
<dbReference type="Pfam" id="PF13662">
    <property type="entry name" value="Toprim_4"/>
    <property type="match status" value="1"/>
</dbReference>
<dbReference type="SMART" id="SM00493">
    <property type="entry name" value="TOPRIM"/>
    <property type="match status" value="1"/>
</dbReference>
<dbReference type="SUPFAM" id="SSF111304">
    <property type="entry name" value="Recombination protein RecR"/>
    <property type="match status" value="1"/>
</dbReference>
<dbReference type="PROSITE" id="PS01300">
    <property type="entry name" value="RECR"/>
    <property type="match status" value="1"/>
</dbReference>
<dbReference type="PROSITE" id="PS50880">
    <property type="entry name" value="TOPRIM"/>
    <property type="match status" value="1"/>
</dbReference>
<keyword id="KW-0227">DNA damage</keyword>
<keyword id="KW-0233">DNA recombination</keyword>
<keyword id="KW-0234">DNA repair</keyword>
<keyword id="KW-0479">Metal-binding</keyword>
<keyword id="KW-0862">Zinc</keyword>
<keyword id="KW-0863">Zinc-finger</keyword>
<protein>
    <recommendedName>
        <fullName evidence="1">Recombination protein RecR</fullName>
    </recommendedName>
</protein>
<feature type="chain" id="PRO_1000001508" description="Recombination protein RecR">
    <location>
        <begin position="1"/>
        <end position="198"/>
    </location>
</feature>
<feature type="domain" description="Toprim" evidence="1">
    <location>
        <begin position="80"/>
        <end position="175"/>
    </location>
</feature>
<feature type="zinc finger region" description="C4-type" evidence="1">
    <location>
        <begin position="57"/>
        <end position="72"/>
    </location>
</feature>
<reference key="1">
    <citation type="journal article" date="2007" name="Nat. Biotechnol.">
        <title>Comparative analysis of the complete genome sequence of the plant growth-promoting bacterium Bacillus amyloliquefaciens FZB42.</title>
        <authorList>
            <person name="Chen X.H."/>
            <person name="Koumoutsi A."/>
            <person name="Scholz R."/>
            <person name="Eisenreich A."/>
            <person name="Schneider K."/>
            <person name="Heinemeyer I."/>
            <person name="Morgenstern B."/>
            <person name="Voss B."/>
            <person name="Hess W.R."/>
            <person name="Reva O."/>
            <person name="Junge H."/>
            <person name="Voigt B."/>
            <person name="Jungblut P.R."/>
            <person name="Vater J."/>
            <person name="Suessmuth R."/>
            <person name="Liesegang H."/>
            <person name="Strittmatter A."/>
            <person name="Gottschalk G."/>
            <person name="Borriss R."/>
        </authorList>
    </citation>
    <scope>NUCLEOTIDE SEQUENCE [LARGE SCALE GENOMIC DNA]</scope>
    <source>
        <strain>DSM 23117 / BGSC 10A6 / LMG 26770 / FZB42</strain>
    </source>
</reference>
<organism>
    <name type="scientific">Bacillus velezensis (strain DSM 23117 / BGSC 10A6 / LMG 26770 / FZB42)</name>
    <name type="common">Bacillus amyloliquefaciens subsp. plantarum</name>
    <dbReference type="NCBI Taxonomy" id="326423"/>
    <lineage>
        <taxon>Bacteria</taxon>
        <taxon>Bacillati</taxon>
        <taxon>Bacillota</taxon>
        <taxon>Bacilli</taxon>
        <taxon>Bacillales</taxon>
        <taxon>Bacillaceae</taxon>
        <taxon>Bacillus</taxon>
        <taxon>Bacillus amyloliquefaciens group</taxon>
    </lineage>
</organism>
<comment type="function">
    <text evidence="1">May play a role in DNA repair. It seems to be involved in an RecBC-independent recombinational process of DNA repair. It may act with RecF and RecO.</text>
</comment>
<comment type="similarity">
    <text evidence="1">Belongs to the RecR family.</text>
</comment>
<proteinExistence type="inferred from homology"/>
<gene>
    <name evidence="1" type="primary">recR</name>
    <name type="ordered locus">RBAM_000270</name>
</gene>